<sequence>MAKQSMKAREVKRVALADKYFAKRAELKAIISDVDATDEDRWNAVLKLQTLPRDSSPSRQRNRCRQTGRPHAFLRKFGLSRIKVREAAMRGEIPGLKKASW</sequence>
<protein>
    <recommendedName>
        <fullName evidence="1">Small ribosomal subunit protein uS14</fullName>
    </recommendedName>
    <alternativeName>
        <fullName evidence="2">30S ribosomal protein S14</fullName>
    </alternativeName>
</protein>
<feature type="chain" id="PRO_1000128562" description="Small ribosomal subunit protein uS14">
    <location>
        <begin position="1"/>
        <end position="101"/>
    </location>
</feature>
<comment type="function">
    <text evidence="1">Binds 16S rRNA, required for the assembly of 30S particles and may also be responsible for determining the conformation of the 16S rRNA at the A site.</text>
</comment>
<comment type="subunit">
    <text evidence="1">Part of the 30S ribosomal subunit. Contacts proteins S3 and S10.</text>
</comment>
<comment type="similarity">
    <text evidence="1">Belongs to the universal ribosomal protein uS14 family.</text>
</comment>
<dbReference type="EMBL" id="CP000026">
    <property type="protein sequence ID" value="AAV79109.1"/>
    <property type="molecule type" value="Genomic_DNA"/>
</dbReference>
<dbReference type="RefSeq" id="WP_001118928.1">
    <property type="nucleotide sequence ID" value="NC_006511.1"/>
</dbReference>
<dbReference type="SMR" id="Q5PIU6"/>
<dbReference type="KEGG" id="spt:SPA3293"/>
<dbReference type="HOGENOM" id="CLU_139869_0_1_6"/>
<dbReference type="Proteomes" id="UP000008185">
    <property type="component" value="Chromosome"/>
</dbReference>
<dbReference type="GO" id="GO:0005737">
    <property type="term" value="C:cytoplasm"/>
    <property type="evidence" value="ECO:0007669"/>
    <property type="project" value="UniProtKB-ARBA"/>
</dbReference>
<dbReference type="GO" id="GO:0015935">
    <property type="term" value="C:small ribosomal subunit"/>
    <property type="evidence" value="ECO:0007669"/>
    <property type="project" value="TreeGrafter"/>
</dbReference>
<dbReference type="GO" id="GO:0019843">
    <property type="term" value="F:rRNA binding"/>
    <property type="evidence" value="ECO:0007669"/>
    <property type="project" value="UniProtKB-UniRule"/>
</dbReference>
<dbReference type="GO" id="GO:0003735">
    <property type="term" value="F:structural constituent of ribosome"/>
    <property type="evidence" value="ECO:0007669"/>
    <property type="project" value="InterPro"/>
</dbReference>
<dbReference type="GO" id="GO:0006412">
    <property type="term" value="P:translation"/>
    <property type="evidence" value="ECO:0007669"/>
    <property type="project" value="UniProtKB-UniRule"/>
</dbReference>
<dbReference type="FunFam" id="1.10.287.1480:FF:000001">
    <property type="entry name" value="30S ribosomal protein S14"/>
    <property type="match status" value="1"/>
</dbReference>
<dbReference type="Gene3D" id="1.10.287.1480">
    <property type="match status" value="1"/>
</dbReference>
<dbReference type="HAMAP" id="MF_00537">
    <property type="entry name" value="Ribosomal_uS14_1"/>
    <property type="match status" value="1"/>
</dbReference>
<dbReference type="InterPro" id="IPR001209">
    <property type="entry name" value="Ribosomal_uS14"/>
</dbReference>
<dbReference type="InterPro" id="IPR023036">
    <property type="entry name" value="Ribosomal_uS14_bac/plastid"/>
</dbReference>
<dbReference type="InterPro" id="IPR018271">
    <property type="entry name" value="Ribosomal_uS14_CS"/>
</dbReference>
<dbReference type="NCBIfam" id="NF006477">
    <property type="entry name" value="PRK08881.1"/>
    <property type="match status" value="1"/>
</dbReference>
<dbReference type="PANTHER" id="PTHR19836">
    <property type="entry name" value="30S RIBOSOMAL PROTEIN S14"/>
    <property type="match status" value="1"/>
</dbReference>
<dbReference type="PANTHER" id="PTHR19836:SF19">
    <property type="entry name" value="SMALL RIBOSOMAL SUBUNIT PROTEIN US14M"/>
    <property type="match status" value="1"/>
</dbReference>
<dbReference type="Pfam" id="PF00253">
    <property type="entry name" value="Ribosomal_S14"/>
    <property type="match status" value="1"/>
</dbReference>
<dbReference type="SUPFAM" id="SSF57716">
    <property type="entry name" value="Glucocorticoid receptor-like (DNA-binding domain)"/>
    <property type="match status" value="1"/>
</dbReference>
<dbReference type="PROSITE" id="PS00527">
    <property type="entry name" value="RIBOSOMAL_S14"/>
    <property type="match status" value="1"/>
</dbReference>
<evidence type="ECO:0000255" key="1">
    <source>
        <dbReference type="HAMAP-Rule" id="MF_00537"/>
    </source>
</evidence>
<evidence type="ECO:0000305" key="2"/>
<gene>
    <name evidence="1" type="primary">rpsN</name>
    <name type="ordered locus">SPA3293</name>
</gene>
<keyword id="KW-0687">Ribonucleoprotein</keyword>
<keyword id="KW-0689">Ribosomal protein</keyword>
<keyword id="KW-0694">RNA-binding</keyword>
<keyword id="KW-0699">rRNA-binding</keyword>
<reference key="1">
    <citation type="journal article" date="2004" name="Nat. Genet.">
        <title>Comparison of genome degradation in Paratyphi A and Typhi, human-restricted serovars of Salmonella enterica that cause typhoid.</title>
        <authorList>
            <person name="McClelland M."/>
            <person name="Sanderson K.E."/>
            <person name="Clifton S.W."/>
            <person name="Latreille P."/>
            <person name="Porwollik S."/>
            <person name="Sabo A."/>
            <person name="Meyer R."/>
            <person name="Bieri T."/>
            <person name="Ozersky P."/>
            <person name="McLellan M."/>
            <person name="Harkins C.R."/>
            <person name="Wang C."/>
            <person name="Nguyen C."/>
            <person name="Berghoff A."/>
            <person name="Elliott G."/>
            <person name="Kohlberg S."/>
            <person name="Strong C."/>
            <person name="Du F."/>
            <person name="Carter J."/>
            <person name="Kremizki C."/>
            <person name="Layman D."/>
            <person name="Leonard S."/>
            <person name="Sun H."/>
            <person name="Fulton L."/>
            <person name="Nash W."/>
            <person name="Miner T."/>
            <person name="Minx P."/>
            <person name="Delehaunty K."/>
            <person name="Fronick C."/>
            <person name="Magrini V."/>
            <person name="Nhan M."/>
            <person name="Warren W."/>
            <person name="Florea L."/>
            <person name="Spieth J."/>
            <person name="Wilson R.K."/>
        </authorList>
    </citation>
    <scope>NUCLEOTIDE SEQUENCE [LARGE SCALE GENOMIC DNA]</scope>
    <source>
        <strain>ATCC 9150 / SARB42</strain>
    </source>
</reference>
<accession>Q5PIU6</accession>
<organism>
    <name type="scientific">Salmonella paratyphi A (strain ATCC 9150 / SARB42)</name>
    <dbReference type="NCBI Taxonomy" id="295319"/>
    <lineage>
        <taxon>Bacteria</taxon>
        <taxon>Pseudomonadati</taxon>
        <taxon>Pseudomonadota</taxon>
        <taxon>Gammaproteobacteria</taxon>
        <taxon>Enterobacterales</taxon>
        <taxon>Enterobacteriaceae</taxon>
        <taxon>Salmonella</taxon>
    </lineage>
</organism>
<proteinExistence type="inferred from homology"/>
<name>RS14_SALPA</name>